<organism>
    <name type="scientific">Agrostis stolonifera</name>
    <name type="common">Creeping bentgrass</name>
    <dbReference type="NCBI Taxonomy" id="63632"/>
    <lineage>
        <taxon>Eukaryota</taxon>
        <taxon>Viridiplantae</taxon>
        <taxon>Streptophyta</taxon>
        <taxon>Embryophyta</taxon>
        <taxon>Tracheophyta</taxon>
        <taxon>Spermatophyta</taxon>
        <taxon>Magnoliopsida</taxon>
        <taxon>Liliopsida</taxon>
        <taxon>Poales</taxon>
        <taxon>Poaceae</taxon>
        <taxon>BOP clade</taxon>
        <taxon>Pooideae</taxon>
        <taxon>Poodae</taxon>
        <taxon>Poeae</taxon>
        <taxon>Poeae Chloroplast Group 1 (Aveneae type)</taxon>
        <taxon>Agrostidodinae</taxon>
        <taxon>Agrostidinae</taxon>
        <taxon>Agrostis</taxon>
    </lineage>
</organism>
<gene>
    <name evidence="2" type="primary">petA</name>
</gene>
<keyword id="KW-0150">Chloroplast</keyword>
<keyword id="KW-0249">Electron transport</keyword>
<keyword id="KW-0349">Heme</keyword>
<keyword id="KW-0408">Iron</keyword>
<keyword id="KW-0472">Membrane</keyword>
<keyword id="KW-0479">Metal-binding</keyword>
<keyword id="KW-0602">Photosynthesis</keyword>
<keyword id="KW-0934">Plastid</keyword>
<keyword id="KW-0732">Signal</keyword>
<keyword id="KW-0793">Thylakoid</keyword>
<keyword id="KW-0812">Transmembrane</keyword>
<keyword id="KW-1133">Transmembrane helix</keyword>
<keyword id="KW-0813">Transport</keyword>
<sequence length="320" mass="35383">MENRNTFSWVKEQMTRSISVSIMIYVITQTSISNAYPIFAQQGYENPREATGRIVCANCHLASKPVDIEVPQAVLPDTVFEAVLRIPYDMQLKQVLANGKKGGLNVGAVLILPEGFELAPPDRISPELKEKIGNLSFQSYRPDKKNILVIGPVPGKKYSEIVFPILSPDPATKKDAYFLKYPIYVGGNRGRGQIYPDGSKSNNTVYNATSTGIVRKILRKEKGGYEISIVDASDGRQVIDTIPPGPELLVSEGESIKLDQPLTSNPNVGGFGQGDAEIVLQDPLRVQGLLFFFASVILAQVFLVLKKKQFEKVQLYEMNF</sequence>
<accession>A1EA21</accession>
<dbReference type="EMBL" id="EF115543">
    <property type="protein sequence ID" value="ABK79593.1"/>
    <property type="molecule type" value="Genomic_DNA"/>
</dbReference>
<dbReference type="RefSeq" id="YP_874749.1">
    <property type="nucleotide sequence ID" value="NC_008591.1"/>
</dbReference>
<dbReference type="SMR" id="A1EA21"/>
<dbReference type="GeneID" id="4524991"/>
<dbReference type="GO" id="GO:0009535">
    <property type="term" value="C:chloroplast thylakoid membrane"/>
    <property type="evidence" value="ECO:0007669"/>
    <property type="project" value="UniProtKB-SubCell"/>
</dbReference>
<dbReference type="GO" id="GO:0009055">
    <property type="term" value="F:electron transfer activity"/>
    <property type="evidence" value="ECO:0007669"/>
    <property type="project" value="UniProtKB-UniRule"/>
</dbReference>
<dbReference type="GO" id="GO:0020037">
    <property type="term" value="F:heme binding"/>
    <property type="evidence" value="ECO:0007669"/>
    <property type="project" value="InterPro"/>
</dbReference>
<dbReference type="GO" id="GO:0005506">
    <property type="term" value="F:iron ion binding"/>
    <property type="evidence" value="ECO:0007669"/>
    <property type="project" value="InterPro"/>
</dbReference>
<dbReference type="GO" id="GO:0015979">
    <property type="term" value="P:photosynthesis"/>
    <property type="evidence" value="ECO:0007669"/>
    <property type="project" value="UniProtKB-UniRule"/>
</dbReference>
<dbReference type="FunFam" id="1.20.5.700:FF:000001">
    <property type="entry name" value="Cytochrome f"/>
    <property type="match status" value="1"/>
</dbReference>
<dbReference type="FunFam" id="2.40.50.100:FF:000007">
    <property type="entry name" value="Cytochrome f"/>
    <property type="match status" value="1"/>
</dbReference>
<dbReference type="FunFam" id="2.60.40.830:FF:000001">
    <property type="entry name" value="Cytochrome f"/>
    <property type="match status" value="1"/>
</dbReference>
<dbReference type="Gene3D" id="2.40.50.100">
    <property type="match status" value="1"/>
</dbReference>
<dbReference type="Gene3D" id="2.60.40.830">
    <property type="entry name" value="Cytochrome f large domain"/>
    <property type="match status" value="1"/>
</dbReference>
<dbReference type="Gene3D" id="1.20.5.700">
    <property type="entry name" value="Single helix bin"/>
    <property type="match status" value="1"/>
</dbReference>
<dbReference type="HAMAP" id="MF_00610">
    <property type="entry name" value="Cytb6_f_cytF"/>
    <property type="match status" value="1"/>
</dbReference>
<dbReference type="InterPro" id="IPR024058">
    <property type="entry name" value="Cyt-f_TM"/>
</dbReference>
<dbReference type="InterPro" id="IPR002325">
    <property type="entry name" value="Cyt_f"/>
</dbReference>
<dbReference type="InterPro" id="IPR024094">
    <property type="entry name" value="Cyt_f_lg_dom"/>
</dbReference>
<dbReference type="InterPro" id="IPR036826">
    <property type="entry name" value="Cyt_f_lg_dom_sf"/>
</dbReference>
<dbReference type="InterPro" id="IPR011054">
    <property type="entry name" value="Rudment_hybrid_motif"/>
</dbReference>
<dbReference type="PANTHER" id="PTHR33288">
    <property type="match status" value="1"/>
</dbReference>
<dbReference type="PANTHER" id="PTHR33288:SF10">
    <property type="entry name" value="CYTOCHROME F"/>
    <property type="match status" value="1"/>
</dbReference>
<dbReference type="Pfam" id="PF01333">
    <property type="entry name" value="Apocytochr_F_C"/>
    <property type="match status" value="1"/>
</dbReference>
<dbReference type="Pfam" id="PF16639">
    <property type="entry name" value="Apocytochr_F_N"/>
    <property type="match status" value="1"/>
</dbReference>
<dbReference type="PRINTS" id="PR00610">
    <property type="entry name" value="CYTOCHROMEF"/>
</dbReference>
<dbReference type="SUPFAM" id="SSF103431">
    <property type="entry name" value="Cytochrome f subunit of the cytochrome b6f complex, transmembrane anchor"/>
    <property type="match status" value="1"/>
</dbReference>
<dbReference type="SUPFAM" id="SSF49441">
    <property type="entry name" value="Cytochrome f, large domain"/>
    <property type="match status" value="1"/>
</dbReference>
<dbReference type="SUPFAM" id="SSF51246">
    <property type="entry name" value="Rudiment single hybrid motif"/>
    <property type="match status" value="1"/>
</dbReference>
<dbReference type="PROSITE" id="PS51010">
    <property type="entry name" value="CYTF"/>
    <property type="match status" value="1"/>
</dbReference>
<protein>
    <recommendedName>
        <fullName evidence="2">Cytochrome f</fullName>
    </recommendedName>
</protein>
<geneLocation type="chloroplast"/>
<reference key="1">
    <citation type="journal article" date="2007" name="Theor. Appl. Genet.">
        <title>Complete chloroplast genome sequences of Hordeum vulgare, Sorghum bicolor and Agrostis stolonifera, and comparative analyses with other grass genomes.</title>
        <authorList>
            <person name="Saski C."/>
            <person name="Lee S.-B."/>
            <person name="Fjellheim S."/>
            <person name="Guda C."/>
            <person name="Jansen R.K."/>
            <person name="Luo H."/>
            <person name="Tomkins J."/>
            <person name="Rognli O.A."/>
            <person name="Daniell H."/>
            <person name="Clarke J.L."/>
        </authorList>
    </citation>
    <scope>NUCLEOTIDE SEQUENCE [LARGE SCALE GENOMIC DNA]</scope>
    <source>
        <strain>cv. Penn A-4</strain>
    </source>
</reference>
<feature type="signal peptide" evidence="2">
    <location>
        <begin position="1"/>
        <end position="35"/>
    </location>
</feature>
<feature type="chain" id="PRO_0000275399" description="Cytochrome f">
    <location>
        <begin position="36"/>
        <end position="320"/>
    </location>
</feature>
<feature type="transmembrane region" description="Helical" evidence="2">
    <location>
        <begin position="286"/>
        <end position="306"/>
    </location>
</feature>
<feature type="binding site" description="axial binding residue" evidence="2">
    <location>
        <position position="36"/>
    </location>
    <ligand>
        <name>heme</name>
        <dbReference type="ChEBI" id="CHEBI:30413"/>
    </ligand>
    <ligandPart>
        <name>Fe</name>
        <dbReference type="ChEBI" id="CHEBI:18248"/>
    </ligandPart>
</feature>
<feature type="binding site" description="covalent" evidence="2">
    <location>
        <position position="56"/>
    </location>
    <ligand>
        <name>heme</name>
        <dbReference type="ChEBI" id="CHEBI:30413"/>
    </ligand>
</feature>
<feature type="binding site" description="covalent" evidence="2">
    <location>
        <position position="59"/>
    </location>
    <ligand>
        <name>heme</name>
        <dbReference type="ChEBI" id="CHEBI:30413"/>
    </ligand>
</feature>
<feature type="binding site" description="axial binding residue" evidence="2">
    <location>
        <position position="60"/>
    </location>
    <ligand>
        <name>heme</name>
        <dbReference type="ChEBI" id="CHEBI:30413"/>
    </ligand>
    <ligandPart>
        <name>Fe</name>
        <dbReference type="ChEBI" id="CHEBI:18248"/>
    </ligandPart>
</feature>
<comment type="function">
    <text evidence="2">Component of the cytochrome b6-f complex, which mediates electron transfer between photosystem II (PSII) and photosystem I (PSI), cyclic electron flow around PSI, and state transitions.</text>
</comment>
<comment type="cofactor">
    <cofactor evidence="2">
        <name>heme</name>
        <dbReference type="ChEBI" id="CHEBI:30413"/>
    </cofactor>
    <text evidence="2">Binds 1 heme group covalently.</text>
</comment>
<comment type="subunit">
    <text evidence="1">The 4 large subunits of the cytochrome b6-f complex are cytochrome b6, subunit IV (17 kDa polypeptide, petD), cytochrome f and the Rieske protein, while the 4 small subunits are PetG, PetL, PetM and PetN. The complex functions as a dimer (By similarity).</text>
</comment>
<comment type="subcellular location">
    <subcellularLocation>
        <location evidence="2">Plastid</location>
        <location evidence="2">Chloroplast thylakoid membrane</location>
        <topology evidence="2">Single-pass membrane protein</topology>
    </subcellularLocation>
</comment>
<comment type="similarity">
    <text evidence="2">Belongs to the cytochrome f family.</text>
</comment>
<name>CYF_AGRST</name>
<evidence type="ECO:0000250" key="1"/>
<evidence type="ECO:0000255" key="2">
    <source>
        <dbReference type="HAMAP-Rule" id="MF_00610"/>
    </source>
</evidence>
<proteinExistence type="inferred from homology"/>